<comment type="function">
    <text evidence="1">Binds directly to 23S rRNA. The L1 stalk is quite mobile in the ribosome, and is involved in E site tRNA release.</text>
</comment>
<comment type="function">
    <text evidence="1">Protein L1 is also a translational repressor protein, it controls the translation of the L11 operon by binding to its mRNA.</text>
</comment>
<comment type="subunit">
    <text evidence="1">Part of the 50S ribosomal subunit.</text>
</comment>
<comment type="similarity">
    <text evidence="1">Belongs to the universal ribosomal protein uL1 family.</text>
</comment>
<name>RL1_CLOBH</name>
<organism>
    <name type="scientific">Clostridium botulinum (strain Hall / ATCC 3502 / NCTC 13319 / Type A)</name>
    <dbReference type="NCBI Taxonomy" id="441771"/>
    <lineage>
        <taxon>Bacteria</taxon>
        <taxon>Bacillati</taxon>
        <taxon>Bacillota</taxon>
        <taxon>Clostridia</taxon>
        <taxon>Eubacteriales</taxon>
        <taxon>Clostridiaceae</taxon>
        <taxon>Clostridium</taxon>
    </lineage>
</organism>
<keyword id="KW-1185">Reference proteome</keyword>
<keyword id="KW-0678">Repressor</keyword>
<keyword id="KW-0687">Ribonucleoprotein</keyword>
<keyword id="KW-0689">Ribosomal protein</keyword>
<keyword id="KW-0694">RNA-binding</keyword>
<keyword id="KW-0699">rRNA-binding</keyword>
<keyword id="KW-0810">Translation regulation</keyword>
<keyword id="KW-0820">tRNA-binding</keyword>
<dbReference type="EMBL" id="AM412317">
    <property type="protein sequence ID" value="CAL85052.1"/>
    <property type="molecule type" value="Genomic_DNA"/>
</dbReference>
<dbReference type="EMBL" id="CP000727">
    <property type="protein sequence ID" value="ABS37271.1"/>
    <property type="molecule type" value="Genomic_DNA"/>
</dbReference>
<dbReference type="RefSeq" id="WP_003357362.1">
    <property type="nucleotide sequence ID" value="NC_009698.1"/>
</dbReference>
<dbReference type="RefSeq" id="YP_001255973.1">
    <property type="nucleotide sequence ID" value="NC_009495.1"/>
</dbReference>
<dbReference type="RefSeq" id="YP_001389214.1">
    <property type="nucleotide sequence ID" value="NC_009698.1"/>
</dbReference>
<dbReference type="SMR" id="A5I7L7"/>
<dbReference type="GeneID" id="5186180"/>
<dbReference type="KEGG" id="cbh:CLC_3436"/>
<dbReference type="KEGG" id="cbo:CBO3491"/>
<dbReference type="PATRIC" id="fig|413999.7.peg.3468"/>
<dbReference type="HOGENOM" id="CLU_062853_0_0_9"/>
<dbReference type="PRO" id="PR:A5I7L7"/>
<dbReference type="Proteomes" id="UP000001986">
    <property type="component" value="Chromosome"/>
</dbReference>
<dbReference type="GO" id="GO:0015934">
    <property type="term" value="C:large ribosomal subunit"/>
    <property type="evidence" value="ECO:0007669"/>
    <property type="project" value="InterPro"/>
</dbReference>
<dbReference type="GO" id="GO:0019843">
    <property type="term" value="F:rRNA binding"/>
    <property type="evidence" value="ECO:0007669"/>
    <property type="project" value="UniProtKB-UniRule"/>
</dbReference>
<dbReference type="GO" id="GO:0003735">
    <property type="term" value="F:structural constituent of ribosome"/>
    <property type="evidence" value="ECO:0007669"/>
    <property type="project" value="InterPro"/>
</dbReference>
<dbReference type="GO" id="GO:0000049">
    <property type="term" value="F:tRNA binding"/>
    <property type="evidence" value="ECO:0007669"/>
    <property type="project" value="UniProtKB-KW"/>
</dbReference>
<dbReference type="GO" id="GO:0006417">
    <property type="term" value="P:regulation of translation"/>
    <property type="evidence" value="ECO:0007669"/>
    <property type="project" value="UniProtKB-KW"/>
</dbReference>
<dbReference type="GO" id="GO:0006412">
    <property type="term" value="P:translation"/>
    <property type="evidence" value="ECO:0007669"/>
    <property type="project" value="UniProtKB-UniRule"/>
</dbReference>
<dbReference type="CDD" id="cd00403">
    <property type="entry name" value="Ribosomal_L1"/>
    <property type="match status" value="1"/>
</dbReference>
<dbReference type="FunFam" id="3.40.50.790:FF:000001">
    <property type="entry name" value="50S ribosomal protein L1"/>
    <property type="match status" value="1"/>
</dbReference>
<dbReference type="Gene3D" id="3.30.190.20">
    <property type="match status" value="1"/>
</dbReference>
<dbReference type="Gene3D" id="3.40.50.790">
    <property type="match status" value="1"/>
</dbReference>
<dbReference type="HAMAP" id="MF_01318_B">
    <property type="entry name" value="Ribosomal_uL1_B"/>
    <property type="match status" value="1"/>
</dbReference>
<dbReference type="InterPro" id="IPR005878">
    <property type="entry name" value="Ribosom_uL1_bac-type"/>
</dbReference>
<dbReference type="InterPro" id="IPR002143">
    <property type="entry name" value="Ribosomal_uL1"/>
</dbReference>
<dbReference type="InterPro" id="IPR023674">
    <property type="entry name" value="Ribosomal_uL1-like"/>
</dbReference>
<dbReference type="InterPro" id="IPR028364">
    <property type="entry name" value="Ribosomal_uL1/biogenesis"/>
</dbReference>
<dbReference type="InterPro" id="IPR016095">
    <property type="entry name" value="Ribosomal_uL1_3-a/b-sand"/>
</dbReference>
<dbReference type="InterPro" id="IPR023673">
    <property type="entry name" value="Ribosomal_uL1_CS"/>
</dbReference>
<dbReference type="NCBIfam" id="TIGR01169">
    <property type="entry name" value="rplA_bact"/>
    <property type="match status" value="1"/>
</dbReference>
<dbReference type="PANTHER" id="PTHR36427">
    <property type="entry name" value="54S RIBOSOMAL PROTEIN L1, MITOCHONDRIAL"/>
    <property type="match status" value="1"/>
</dbReference>
<dbReference type="PANTHER" id="PTHR36427:SF3">
    <property type="entry name" value="LARGE RIBOSOMAL SUBUNIT PROTEIN UL1M"/>
    <property type="match status" value="1"/>
</dbReference>
<dbReference type="Pfam" id="PF00687">
    <property type="entry name" value="Ribosomal_L1"/>
    <property type="match status" value="1"/>
</dbReference>
<dbReference type="PIRSF" id="PIRSF002155">
    <property type="entry name" value="Ribosomal_L1"/>
    <property type="match status" value="1"/>
</dbReference>
<dbReference type="SUPFAM" id="SSF56808">
    <property type="entry name" value="Ribosomal protein L1"/>
    <property type="match status" value="1"/>
</dbReference>
<dbReference type="PROSITE" id="PS01199">
    <property type="entry name" value="RIBOSOMAL_L1"/>
    <property type="match status" value="1"/>
</dbReference>
<gene>
    <name evidence="1" type="primary">rplA</name>
    <name type="ordered locus">CBO3491</name>
    <name type="ordered locus">CLC_3436</name>
</gene>
<protein>
    <recommendedName>
        <fullName evidence="1">Large ribosomal subunit protein uL1</fullName>
    </recommendedName>
    <alternativeName>
        <fullName evidence="2">50S ribosomal protein L1</fullName>
    </alternativeName>
</protein>
<proteinExistence type="inferred from homology"/>
<sequence length="229" mass="24644">MGKKYTESVKLVDKNTLYTVQEAIELVTKTSKAKFDETVELAVRLGVDPRHADQQVRGAVVLPHGTGKTVRVLVFAKGDKVNEAQEAGADFVGAEELVEKIQKENWFDFDVVVATPDMMGVVGRLGRVLGPKGLMPNPKSGTVTFDVAKAIADIKAGKVEYRVDKTAIIHVPIGKSSFGEEKLSDNFHVLMEAVVKAKPAAAKGQYIKSVAISSTMGPGIKINPGKVLE</sequence>
<evidence type="ECO:0000255" key="1">
    <source>
        <dbReference type="HAMAP-Rule" id="MF_01318"/>
    </source>
</evidence>
<evidence type="ECO:0000305" key="2"/>
<reference key="1">
    <citation type="journal article" date="2007" name="Genome Res.">
        <title>Genome sequence of a proteolytic (Group I) Clostridium botulinum strain Hall A and comparative analysis of the clostridial genomes.</title>
        <authorList>
            <person name="Sebaihia M."/>
            <person name="Peck M.W."/>
            <person name="Minton N.P."/>
            <person name="Thomson N.R."/>
            <person name="Holden M.T.G."/>
            <person name="Mitchell W.J."/>
            <person name="Carter A.T."/>
            <person name="Bentley S.D."/>
            <person name="Mason D.R."/>
            <person name="Crossman L."/>
            <person name="Paul C.J."/>
            <person name="Ivens A."/>
            <person name="Wells-Bennik M.H.J."/>
            <person name="Davis I.J."/>
            <person name="Cerdeno-Tarraga A.M."/>
            <person name="Churcher C."/>
            <person name="Quail M.A."/>
            <person name="Chillingworth T."/>
            <person name="Feltwell T."/>
            <person name="Fraser A."/>
            <person name="Goodhead I."/>
            <person name="Hance Z."/>
            <person name="Jagels K."/>
            <person name="Larke N."/>
            <person name="Maddison M."/>
            <person name="Moule S."/>
            <person name="Mungall K."/>
            <person name="Norbertczak H."/>
            <person name="Rabbinowitsch E."/>
            <person name="Sanders M."/>
            <person name="Simmonds M."/>
            <person name="White B."/>
            <person name="Whithead S."/>
            <person name="Parkhill J."/>
        </authorList>
    </citation>
    <scope>NUCLEOTIDE SEQUENCE [LARGE SCALE GENOMIC DNA]</scope>
    <source>
        <strain>Hall / ATCC 3502 / NCTC 13319 / Type A</strain>
    </source>
</reference>
<reference key="2">
    <citation type="journal article" date="2007" name="PLoS ONE">
        <title>Analysis of the neurotoxin complex genes in Clostridium botulinum A1-A4 and B1 strains: BoNT/A3, /Ba4 and /B1 clusters are located within plasmids.</title>
        <authorList>
            <person name="Smith T.J."/>
            <person name="Hill K.K."/>
            <person name="Foley B.T."/>
            <person name="Detter J.C."/>
            <person name="Munk A.C."/>
            <person name="Bruce D.C."/>
            <person name="Doggett N.A."/>
            <person name="Smith L.A."/>
            <person name="Marks J.D."/>
            <person name="Xie G."/>
            <person name="Brettin T.S."/>
        </authorList>
    </citation>
    <scope>NUCLEOTIDE SEQUENCE [LARGE SCALE GENOMIC DNA]</scope>
    <source>
        <strain>Hall / ATCC 3502 / NCTC 13319 / Type A</strain>
    </source>
</reference>
<accession>A5I7L7</accession>
<accession>A7G8U9</accession>
<feature type="chain" id="PRO_0000307990" description="Large ribosomal subunit protein uL1">
    <location>
        <begin position="1"/>
        <end position="229"/>
    </location>
</feature>